<comment type="function">
    <text evidence="1">Attaches a formyl group to the free amino group of methionyl-tRNA(fMet). The formyl group appears to play a dual role in the initiator identity of N-formylmethionyl-tRNA by promoting its recognition by IF2 and preventing the misappropriation of this tRNA by the elongation apparatus.</text>
</comment>
<comment type="catalytic activity">
    <reaction evidence="1">
        <text>L-methionyl-tRNA(fMet) + (6R)-10-formyltetrahydrofolate = N-formyl-L-methionyl-tRNA(fMet) + (6S)-5,6,7,8-tetrahydrofolate + H(+)</text>
        <dbReference type="Rhea" id="RHEA:24380"/>
        <dbReference type="Rhea" id="RHEA-COMP:9952"/>
        <dbReference type="Rhea" id="RHEA-COMP:9953"/>
        <dbReference type="ChEBI" id="CHEBI:15378"/>
        <dbReference type="ChEBI" id="CHEBI:57453"/>
        <dbReference type="ChEBI" id="CHEBI:78530"/>
        <dbReference type="ChEBI" id="CHEBI:78844"/>
        <dbReference type="ChEBI" id="CHEBI:195366"/>
        <dbReference type="EC" id="2.1.2.9"/>
    </reaction>
</comment>
<comment type="similarity">
    <text evidence="1">Belongs to the Fmt family.</text>
</comment>
<accession>Q04SV8</accession>
<protein>
    <recommendedName>
        <fullName evidence="1">Methionyl-tRNA formyltransferase</fullName>
        <ecNumber evidence="1">2.1.2.9</ecNumber>
    </recommendedName>
</protein>
<feature type="chain" id="PRO_1000020092" description="Methionyl-tRNA formyltransferase">
    <location>
        <begin position="1"/>
        <end position="315"/>
    </location>
</feature>
<feature type="binding site" evidence="1">
    <location>
        <begin position="112"/>
        <end position="115"/>
    </location>
    <ligand>
        <name>(6S)-5,6,7,8-tetrahydrofolate</name>
        <dbReference type="ChEBI" id="CHEBI:57453"/>
    </ligand>
</feature>
<sequence length="315" mass="35106">MKIGYFGTPEHSAKLLKALIDSTLAEVLFVVTNPDRPKGRNKKTEAGPVKKTALEHHIPVFQYESIKREKEKALSDFGSFPADLYVVFAYGSILPKEVYECPPLSSINLHGSLLPDLRGASPVQTALWKGYSASGITIQYIGEKMDEGDILLSQKIDIIPEDNTETLMNKITDAGTESILRLLKAYDGKPFPAIPQNHAKATYCGKIKSEDRILDWSLGAEELHNRIRALYPDAIATTRFREKRIGILKTKLSSLSIESNPEPGKLKRLDKKGLLTQCGDGRFLEILELQPENKNRMSASDFLNGFRIQEGETFG</sequence>
<keyword id="KW-0648">Protein biosynthesis</keyword>
<keyword id="KW-0808">Transferase</keyword>
<reference key="1">
    <citation type="journal article" date="2006" name="Proc. Natl. Acad. Sci. U.S.A.">
        <title>Genome reduction in Leptospira borgpetersenii reflects limited transmission potential.</title>
        <authorList>
            <person name="Bulach D.M."/>
            <person name="Zuerner R.L."/>
            <person name="Wilson P."/>
            <person name="Seemann T."/>
            <person name="McGrath A."/>
            <person name="Cullen P.A."/>
            <person name="Davis J."/>
            <person name="Johnson M."/>
            <person name="Kuczek E."/>
            <person name="Alt D.P."/>
            <person name="Peterson-Burch B."/>
            <person name="Coppel R.L."/>
            <person name="Rood J.I."/>
            <person name="Davies J.K."/>
            <person name="Adler B."/>
        </authorList>
    </citation>
    <scope>NUCLEOTIDE SEQUENCE [LARGE SCALE GENOMIC DNA]</scope>
    <source>
        <strain>JB197</strain>
    </source>
</reference>
<name>FMT_LEPBJ</name>
<proteinExistence type="inferred from homology"/>
<gene>
    <name evidence="1" type="primary">fmt</name>
    <name type="ordered locus">LBJ_1439</name>
</gene>
<evidence type="ECO:0000255" key="1">
    <source>
        <dbReference type="HAMAP-Rule" id="MF_00182"/>
    </source>
</evidence>
<dbReference type="EC" id="2.1.2.9" evidence="1"/>
<dbReference type="EMBL" id="CP000350">
    <property type="protein sequence ID" value="ABJ76012.1"/>
    <property type="molecule type" value="Genomic_DNA"/>
</dbReference>
<dbReference type="RefSeq" id="WP_011670259.1">
    <property type="nucleotide sequence ID" value="NC_008510.1"/>
</dbReference>
<dbReference type="SMR" id="Q04SV8"/>
<dbReference type="KEGG" id="lbj:LBJ_1439"/>
<dbReference type="HOGENOM" id="CLU_033347_1_1_12"/>
<dbReference type="Proteomes" id="UP000000656">
    <property type="component" value="Chromosome 1"/>
</dbReference>
<dbReference type="GO" id="GO:0005829">
    <property type="term" value="C:cytosol"/>
    <property type="evidence" value="ECO:0007669"/>
    <property type="project" value="TreeGrafter"/>
</dbReference>
<dbReference type="GO" id="GO:0004479">
    <property type="term" value="F:methionyl-tRNA formyltransferase activity"/>
    <property type="evidence" value="ECO:0007669"/>
    <property type="project" value="UniProtKB-UniRule"/>
</dbReference>
<dbReference type="CDD" id="cd08646">
    <property type="entry name" value="FMT_core_Met-tRNA-FMT_N"/>
    <property type="match status" value="1"/>
</dbReference>
<dbReference type="CDD" id="cd08704">
    <property type="entry name" value="Met_tRNA_FMT_C"/>
    <property type="match status" value="1"/>
</dbReference>
<dbReference type="Gene3D" id="3.10.25.10">
    <property type="entry name" value="Formyl transferase, C-terminal domain"/>
    <property type="match status" value="1"/>
</dbReference>
<dbReference type="Gene3D" id="3.40.50.170">
    <property type="entry name" value="Formyl transferase, N-terminal domain"/>
    <property type="match status" value="1"/>
</dbReference>
<dbReference type="HAMAP" id="MF_00182">
    <property type="entry name" value="Formyl_trans"/>
    <property type="match status" value="1"/>
</dbReference>
<dbReference type="InterPro" id="IPR005794">
    <property type="entry name" value="Fmt"/>
</dbReference>
<dbReference type="InterPro" id="IPR005793">
    <property type="entry name" value="Formyl_trans_C"/>
</dbReference>
<dbReference type="InterPro" id="IPR037022">
    <property type="entry name" value="Formyl_trans_C_sf"/>
</dbReference>
<dbReference type="InterPro" id="IPR002376">
    <property type="entry name" value="Formyl_transf_N"/>
</dbReference>
<dbReference type="InterPro" id="IPR036477">
    <property type="entry name" value="Formyl_transf_N_sf"/>
</dbReference>
<dbReference type="InterPro" id="IPR011034">
    <property type="entry name" value="Formyl_transferase-like_C_sf"/>
</dbReference>
<dbReference type="InterPro" id="IPR044135">
    <property type="entry name" value="Met-tRNA-FMT_C"/>
</dbReference>
<dbReference type="InterPro" id="IPR041711">
    <property type="entry name" value="Met-tRNA-FMT_N"/>
</dbReference>
<dbReference type="NCBIfam" id="TIGR00460">
    <property type="entry name" value="fmt"/>
    <property type="match status" value="1"/>
</dbReference>
<dbReference type="PANTHER" id="PTHR11138">
    <property type="entry name" value="METHIONYL-TRNA FORMYLTRANSFERASE"/>
    <property type="match status" value="1"/>
</dbReference>
<dbReference type="PANTHER" id="PTHR11138:SF5">
    <property type="entry name" value="METHIONYL-TRNA FORMYLTRANSFERASE, MITOCHONDRIAL"/>
    <property type="match status" value="1"/>
</dbReference>
<dbReference type="Pfam" id="PF02911">
    <property type="entry name" value="Formyl_trans_C"/>
    <property type="match status" value="1"/>
</dbReference>
<dbReference type="Pfam" id="PF00551">
    <property type="entry name" value="Formyl_trans_N"/>
    <property type="match status" value="1"/>
</dbReference>
<dbReference type="SUPFAM" id="SSF50486">
    <property type="entry name" value="FMT C-terminal domain-like"/>
    <property type="match status" value="1"/>
</dbReference>
<dbReference type="SUPFAM" id="SSF53328">
    <property type="entry name" value="Formyltransferase"/>
    <property type="match status" value="1"/>
</dbReference>
<organism>
    <name type="scientific">Leptospira borgpetersenii serovar Hardjo-bovis (strain JB197)</name>
    <dbReference type="NCBI Taxonomy" id="355277"/>
    <lineage>
        <taxon>Bacteria</taxon>
        <taxon>Pseudomonadati</taxon>
        <taxon>Spirochaetota</taxon>
        <taxon>Spirochaetia</taxon>
        <taxon>Leptospirales</taxon>
        <taxon>Leptospiraceae</taxon>
        <taxon>Leptospira</taxon>
    </lineage>
</organism>